<accession>Q3T1G7</accession>
<sequence length="770" mass="86212">MDFSKFLADDFDVKDWINAAFRAGPKDGAAGKADGHAATLVMKLQLFIQEVNHAVEETSLQALQNMPKVLRDVEALKQEASFLKEQMILVKEDIKKFEQDTSQSMQVLVEIDQVKSRMQLAAESLQEADKWSTLSADIEETFKTQDIAVISAKLTGMQSSLMMLVDTPDYSEKCVHLEALKNRLEALASPQIVAAFTSQSVDQSKVFVKVFTEIDRMPQLLAYYYKCHKVQLLATWQELCQRDLPLDRQLTGLYHALLGAWHTQTQWATQVFKNPYEVVTVLLIQTLGALVPSLPMCLSEAVERAGPELELTRLLEFYDTTAHFAKGLEMALLPHLQDHNLVKVVELVDAVYGPYKPYQLKYGDLEESNLLIQISAVPLEHGEVIDCVQELSQSVHKLFGLASAAVDRCAKFTNGLGTCGLLTALKSLFTKYVSHFTNALQSIRKKCKLDDIPPNSLFQEDWTAFQNSVRIIATCGELLRQCGDFEQQLANRILSTAGKYLSDSYSPRSLAGFQDSILTDKKSPAKNPWQEYNYLQKDNPAEYANLMEILYTLKEKGSSNHNLLSVSRTALTRLNQQAHQLAFDSVFLRIKQQLLLVSRMDSWNTAGIGETLTDDLPAFSLTPLEYISNIGQYIMSLPLNLEPFVTQEDSALELALHAGKLPFPPEQGEELPELDNMADNWLGSIARATMQTYCDGILQIPAVTPHSTKQLATDIDYLINVMDALGLQPSRTLQNIATLLKAKPEEYRQVSKGLPRRLAATVATMRGVNY</sequence>
<organism>
    <name type="scientific">Rattus norvegicus</name>
    <name type="common">Rat</name>
    <dbReference type="NCBI Taxonomy" id="10116"/>
    <lineage>
        <taxon>Eukaryota</taxon>
        <taxon>Metazoa</taxon>
        <taxon>Chordata</taxon>
        <taxon>Craniata</taxon>
        <taxon>Vertebrata</taxon>
        <taxon>Euteleostomi</taxon>
        <taxon>Mammalia</taxon>
        <taxon>Eutheria</taxon>
        <taxon>Euarchontoglires</taxon>
        <taxon>Glires</taxon>
        <taxon>Rodentia</taxon>
        <taxon>Myomorpha</taxon>
        <taxon>Muroidea</taxon>
        <taxon>Muridae</taxon>
        <taxon>Murinae</taxon>
        <taxon>Rattus</taxon>
    </lineage>
</organism>
<comment type="function">
    <text evidence="1">Required for normal Golgi function.</text>
</comment>
<comment type="subunit">
    <text evidence="1">Component of the conserved oligomeric Golgi complex which is composed of eight different subunits and is required for normal Golgi morphology and localization.</text>
</comment>
<comment type="subcellular location">
    <subcellularLocation>
        <location evidence="1">Golgi apparatus membrane</location>
        <topology evidence="1">Peripheral membrane protein</topology>
    </subcellularLocation>
</comment>
<comment type="similarity">
    <text evidence="2">Belongs to the COG7 family.</text>
</comment>
<keyword id="KW-0333">Golgi apparatus</keyword>
<keyword id="KW-0472">Membrane</keyword>
<keyword id="KW-0653">Protein transport</keyword>
<keyword id="KW-1185">Reference proteome</keyword>
<keyword id="KW-0813">Transport</keyword>
<protein>
    <recommendedName>
        <fullName>Conserved oligomeric Golgi complex subunit 7</fullName>
        <shortName>COG complex subunit 7</shortName>
    </recommendedName>
    <alternativeName>
        <fullName>Component of oligomeric Golgi complex 7</fullName>
    </alternativeName>
</protein>
<feature type="chain" id="PRO_0000320148" description="Conserved oligomeric Golgi complex subunit 7">
    <location>
        <begin position="1"/>
        <end position="770"/>
    </location>
</feature>
<gene>
    <name type="primary">Cog7</name>
</gene>
<name>COG7_RAT</name>
<reference key="1">
    <citation type="journal article" date="2004" name="Genome Res.">
        <title>The status, quality, and expansion of the NIH full-length cDNA project: the Mammalian Gene Collection (MGC).</title>
        <authorList>
            <consortium name="The MGC Project Team"/>
        </authorList>
    </citation>
    <scope>NUCLEOTIDE SEQUENCE [LARGE SCALE MRNA]</scope>
    <source>
        <tissue>Prostate</tissue>
    </source>
</reference>
<proteinExistence type="evidence at transcript level"/>
<dbReference type="EMBL" id="BC101931">
    <property type="protein sequence ID" value="AAI01932.1"/>
    <property type="molecule type" value="mRNA"/>
</dbReference>
<dbReference type="RefSeq" id="NP_001029061.1">
    <property type="nucleotide sequence ID" value="NM_001033889.2"/>
</dbReference>
<dbReference type="SMR" id="Q3T1G7"/>
<dbReference type="FunCoup" id="Q3T1G7">
    <property type="interactions" value="1616"/>
</dbReference>
<dbReference type="STRING" id="10116.ENSRNOP00000069666"/>
<dbReference type="PhosphoSitePlus" id="Q3T1G7"/>
<dbReference type="PaxDb" id="10116-ENSRNOP00000025400"/>
<dbReference type="GeneID" id="293456"/>
<dbReference type="KEGG" id="rno:293456"/>
<dbReference type="UCSC" id="RGD:1566058">
    <property type="organism name" value="rat"/>
</dbReference>
<dbReference type="AGR" id="RGD:1566058"/>
<dbReference type="CTD" id="91949"/>
<dbReference type="RGD" id="1566058">
    <property type="gene designation" value="Cog7"/>
</dbReference>
<dbReference type="VEuPathDB" id="HostDB:ENSRNOG00000060008"/>
<dbReference type="eggNOG" id="KOG4182">
    <property type="taxonomic scope" value="Eukaryota"/>
</dbReference>
<dbReference type="HOGENOM" id="CLU_006044_2_0_1"/>
<dbReference type="InParanoid" id="Q3T1G7"/>
<dbReference type="OrthoDB" id="43262at9989"/>
<dbReference type="PhylomeDB" id="Q3T1G7"/>
<dbReference type="TreeFam" id="TF324498"/>
<dbReference type="Reactome" id="R-RNO-6807878">
    <property type="pathway name" value="COPI-mediated anterograde transport"/>
</dbReference>
<dbReference type="Reactome" id="R-RNO-6811438">
    <property type="pathway name" value="Intra-Golgi traffic"/>
</dbReference>
<dbReference type="Reactome" id="R-RNO-6811440">
    <property type="pathway name" value="Retrograde transport at the Trans-Golgi-Network"/>
</dbReference>
<dbReference type="PRO" id="PR:Q3T1G7"/>
<dbReference type="Proteomes" id="UP000002494">
    <property type="component" value="Chromosome 1"/>
</dbReference>
<dbReference type="Bgee" id="ENSRNOG00000060008">
    <property type="expression patterns" value="Expressed in kidney and 20 other cell types or tissues"/>
</dbReference>
<dbReference type="GO" id="GO:0000139">
    <property type="term" value="C:Golgi membrane"/>
    <property type="evidence" value="ECO:0007669"/>
    <property type="project" value="UniProtKB-SubCell"/>
</dbReference>
<dbReference type="GO" id="GO:0017119">
    <property type="term" value="C:Golgi transport complex"/>
    <property type="evidence" value="ECO:0000266"/>
    <property type="project" value="RGD"/>
</dbReference>
<dbReference type="GO" id="GO:0070085">
    <property type="term" value="P:glycosylation"/>
    <property type="evidence" value="ECO:0000266"/>
    <property type="project" value="RGD"/>
</dbReference>
<dbReference type="GO" id="GO:0007030">
    <property type="term" value="P:Golgi organization"/>
    <property type="evidence" value="ECO:0000266"/>
    <property type="project" value="RGD"/>
</dbReference>
<dbReference type="GO" id="GO:0006886">
    <property type="term" value="P:intracellular protein transport"/>
    <property type="evidence" value="ECO:0000266"/>
    <property type="project" value="RGD"/>
</dbReference>
<dbReference type="GO" id="GO:0006486">
    <property type="term" value="P:protein glycosylation"/>
    <property type="evidence" value="ECO:0000266"/>
    <property type="project" value="RGD"/>
</dbReference>
<dbReference type="GO" id="GO:0034067">
    <property type="term" value="P:protein localization to Golgi apparatus"/>
    <property type="evidence" value="ECO:0000266"/>
    <property type="project" value="RGD"/>
</dbReference>
<dbReference type="GO" id="GO:0033365">
    <property type="term" value="P:protein localization to organelle"/>
    <property type="evidence" value="ECO:0000266"/>
    <property type="project" value="RGD"/>
</dbReference>
<dbReference type="GO" id="GO:0050821">
    <property type="term" value="P:protein stabilization"/>
    <property type="evidence" value="ECO:0000266"/>
    <property type="project" value="RGD"/>
</dbReference>
<dbReference type="GO" id="GO:0000301">
    <property type="term" value="P:retrograde transport, vesicle recycling within Golgi"/>
    <property type="evidence" value="ECO:0000266"/>
    <property type="project" value="RGD"/>
</dbReference>
<dbReference type="GO" id="GO:0006890">
    <property type="term" value="P:retrograde vesicle-mediated transport, Golgi to endoplasmic reticulum"/>
    <property type="evidence" value="ECO:0000266"/>
    <property type="project" value="RGD"/>
</dbReference>
<dbReference type="InterPro" id="IPR019335">
    <property type="entry name" value="COG7"/>
</dbReference>
<dbReference type="PANTHER" id="PTHR21443">
    <property type="entry name" value="CONSERVED OLIGOMERIC GOLGI COMPLEX COMPONENT 7"/>
    <property type="match status" value="1"/>
</dbReference>
<dbReference type="PANTHER" id="PTHR21443:SF0">
    <property type="entry name" value="CONSERVED OLIGOMERIC GOLGI COMPLEX SUBUNIT 7"/>
    <property type="match status" value="1"/>
</dbReference>
<dbReference type="Pfam" id="PF10191">
    <property type="entry name" value="COG7"/>
    <property type="match status" value="1"/>
</dbReference>
<evidence type="ECO:0000250" key="1">
    <source>
        <dbReference type="UniProtKB" id="P83436"/>
    </source>
</evidence>
<evidence type="ECO:0000305" key="2"/>